<feature type="chain" id="PRO_0000295733" description="Coiled-coil domain-containing protein 9B">
    <location>
        <begin position="1"/>
        <end position="534"/>
    </location>
</feature>
<feature type="region of interest" description="Disordered" evidence="2">
    <location>
        <begin position="173"/>
        <end position="237"/>
    </location>
</feature>
<feature type="region of interest" description="Disordered" evidence="2">
    <location>
        <begin position="274"/>
        <end position="534"/>
    </location>
</feature>
<feature type="coiled-coil region" evidence="1">
    <location>
        <begin position="60"/>
        <end position="97"/>
    </location>
</feature>
<feature type="compositionally biased region" description="Basic and acidic residues" evidence="2">
    <location>
        <begin position="173"/>
        <end position="183"/>
    </location>
</feature>
<feature type="compositionally biased region" description="Polar residues" evidence="2">
    <location>
        <begin position="201"/>
        <end position="211"/>
    </location>
</feature>
<feature type="compositionally biased region" description="Basic residues" evidence="2">
    <location>
        <begin position="288"/>
        <end position="297"/>
    </location>
</feature>
<feature type="compositionally biased region" description="Basic and acidic residues" evidence="2">
    <location>
        <begin position="329"/>
        <end position="347"/>
    </location>
</feature>
<feature type="compositionally biased region" description="Low complexity" evidence="2">
    <location>
        <begin position="382"/>
        <end position="393"/>
    </location>
</feature>
<feature type="compositionally biased region" description="Polar residues" evidence="2">
    <location>
        <begin position="401"/>
        <end position="410"/>
    </location>
</feature>
<feature type="compositionally biased region" description="Polar residues" evidence="2">
    <location>
        <begin position="456"/>
        <end position="467"/>
    </location>
</feature>
<feature type="modified residue" description="Phosphoserine" evidence="10 11">
    <location>
        <position position="201"/>
    </location>
</feature>
<feature type="modified residue" description="Phosphoserine" evidence="9">
    <location>
        <position position="392"/>
    </location>
</feature>
<feature type="splice variant" id="VSP_027037" description="In isoform 2." evidence="4 5">
    <location>
        <begin position="1"/>
        <end position="210"/>
    </location>
</feature>
<feature type="splice variant" id="VSP_027038" description="In isoform 3 and isoform 4." evidence="4 6">
    <location>
        <begin position="1"/>
        <end position="68"/>
    </location>
</feature>
<feature type="splice variant" id="VSP_062166" description="In isoform 5.">
    <location>
        <begin position="1"/>
        <end position="44"/>
    </location>
</feature>
<feature type="splice variant" id="VSP_027039" description="In isoform 3 and isoform 4." evidence="4 6">
    <original>RIVALRKKNQALLRRYQEIQEDRRQAEQGGMAVTTPALLQPDGLTVTISQVPG</original>
    <variation>MPLACEHPVGVSSSVGNAGRAGVGTQAWGTTERTQHPGPAQHCPCGLRVFVLQ</variation>
    <location>
        <begin position="69"/>
        <end position="121"/>
    </location>
</feature>
<feature type="splice variant" id="VSP_027040" description="In isoform 2." evidence="4 5">
    <original>DSARK</original>
    <variation>MRHRE</variation>
    <location>
        <begin position="211"/>
        <end position="215"/>
    </location>
</feature>
<feature type="splice variant" id="VSP_027041" description="In isoform 3." evidence="4">
    <original>PRSHQKLQPPPLLPDGKGRGGQASRPSVAPATG</original>
    <variation>EPTPTSSLPSLALFIFHPLVLSFLCLLVSYFQS</variation>
    <location>
        <begin position="293"/>
        <end position="325"/>
    </location>
</feature>
<feature type="splice variant" id="VSP_027042" description="In isoform 3." evidence="4">
    <location>
        <begin position="326"/>
        <end position="534"/>
    </location>
</feature>
<feature type="sequence variant" id="VAR_035620" description="In a colorectal cancer sample; somatic mutation." evidence="3">
    <original>G</original>
    <variation>E</variation>
    <location>
        <position position="189"/>
    </location>
</feature>
<feature type="sequence conflict" description="In Ref. 1; BAC86405." evidence="7" ref="1">
    <original>A</original>
    <variation>T</variation>
    <location>
        <position position="236"/>
    </location>
</feature>
<feature type="sequence conflict" description="In Ref. 1; BAC86405." evidence="7" ref="1">
    <original>S</original>
    <variation>N</variation>
    <location>
        <position position="316"/>
    </location>
</feature>
<dbReference type="EMBL" id="AK125329">
    <property type="protein sequence ID" value="BAC86132.1"/>
    <property type="molecule type" value="mRNA"/>
</dbReference>
<dbReference type="EMBL" id="AK126035">
    <property type="protein sequence ID" value="BAC86405.1"/>
    <property type="molecule type" value="mRNA"/>
</dbReference>
<dbReference type="EMBL" id="AK126485">
    <property type="status" value="NOT_ANNOTATED_CDS"/>
    <property type="molecule type" value="mRNA"/>
</dbReference>
<dbReference type="EMBL" id="CH471125">
    <property type="protein sequence ID" value="EAW92404.1"/>
    <property type="molecule type" value="Genomic_DNA"/>
</dbReference>
<dbReference type="EMBL" id="BC140897">
    <property type="protein sequence ID" value="AAI40898.1"/>
    <property type="molecule type" value="mRNA"/>
</dbReference>
<dbReference type="EMBL" id="BC140902">
    <property type="protein sequence ID" value="AAI40903.1"/>
    <property type="molecule type" value="mRNA"/>
</dbReference>
<dbReference type="EMBL" id="CR749408">
    <property type="protein sequence ID" value="CAH18251.1"/>
    <property type="status" value="ALT_INIT"/>
    <property type="molecule type" value="mRNA"/>
</dbReference>
<dbReference type="CCDS" id="CCDS10055.3">
    <molecule id="Q6ZUT6-5"/>
</dbReference>
<dbReference type="RefSeq" id="NP_997263.3">
    <molecule id="Q6ZUT6-5"/>
    <property type="nucleotide sequence ID" value="NM_207380.3"/>
</dbReference>
<dbReference type="SMR" id="Q6ZUT6"/>
<dbReference type="BioGRID" id="132557">
    <property type="interactions" value="13"/>
</dbReference>
<dbReference type="FunCoup" id="Q6ZUT6">
    <property type="interactions" value="48"/>
</dbReference>
<dbReference type="IntAct" id="Q6ZUT6">
    <property type="interactions" value="3"/>
</dbReference>
<dbReference type="STRING" id="9606.ENSP00000453969"/>
<dbReference type="iPTMnet" id="Q6ZUT6"/>
<dbReference type="PhosphoSitePlus" id="Q6ZUT6"/>
<dbReference type="BioMuta" id="C15orf52"/>
<dbReference type="DMDM" id="74712068"/>
<dbReference type="jPOST" id="Q6ZUT6"/>
<dbReference type="MassIVE" id="Q6ZUT6"/>
<dbReference type="PaxDb" id="9606-ENSP00000453969"/>
<dbReference type="PeptideAtlas" id="Q6ZUT6"/>
<dbReference type="ProteomicsDB" id="68361">
    <molecule id="Q6ZUT6-1"/>
</dbReference>
<dbReference type="ProteomicsDB" id="68362">
    <molecule id="Q6ZUT6-2"/>
</dbReference>
<dbReference type="ProteomicsDB" id="68363">
    <molecule id="Q6ZUT6-3"/>
</dbReference>
<dbReference type="ProteomicsDB" id="68364">
    <molecule id="Q6ZUT6-4"/>
</dbReference>
<dbReference type="Pumba" id="Q6ZUT6"/>
<dbReference type="Antibodypedia" id="52258">
    <property type="antibodies" value="49 antibodies from 9 providers"/>
</dbReference>
<dbReference type="DNASU" id="388115"/>
<dbReference type="Ensembl" id="ENST00000397536.7">
    <molecule id="Q6ZUT6-5"/>
    <property type="protein sequence ID" value="ENSP00000380670.3"/>
    <property type="gene ID" value="ENSG00000188549.13"/>
</dbReference>
<dbReference type="GeneID" id="388115"/>
<dbReference type="KEGG" id="hsa:388115"/>
<dbReference type="MANE-Select" id="ENST00000397536.7">
    <molecule id="Q6ZUT6-5"/>
    <property type="protein sequence ID" value="ENSP00000380670.3"/>
    <property type="RefSeq nucleotide sequence ID" value="NM_207380.3"/>
    <property type="RefSeq protein sequence ID" value="NP_997263.3"/>
</dbReference>
<dbReference type="UCSC" id="uc001zlh.5">
    <molecule id="Q6ZUT6-1"/>
    <property type="organism name" value="human"/>
</dbReference>
<dbReference type="AGR" id="HGNC:33488"/>
<dbReference type="CTD" id="388115"/>
<dbReference type="DisGeNET" id="388115"/>
<dbReference type="GeneCards" id="CCDC9B"/>
<dbReference type="HGNC" id="HGNC:33488">
    <property type="gene designation" value="CCDC9B"/>
</dbReference>
<dbReference type="HPA" id="ENSG00000188549">
    <property type="expression patterns" value="Tissue enhanced (intestine)"/>
</dbReference>
<dbReference type="neXtProt" id="NX_Q6ZUT6"/>
<dbReference type="OpenTargets" id="ENSG00000188549"/>
<dbReference type="PharmGKB" id="PA162378161"/>
<dbReference type="VEuPathDB" id="HostDB:ENSG00000188549"/>
<dbReference type="eggNOG" id="ENOG502S0JY">
    <property type="taxonomic scope" value="Eukaryota"/>
</dbReference>
<dbReference type="GeneTree" id="ENSGT00530000063950"/>
<dbReference type="HOGENOM" id="CLU_857803_0_0_1"/>
<dbReference type="InParanoid" id="Q6ZUT6"/>
<dbReference type="OMA" id="GPPEVGW"/>
<dbReference type="OrthoDB" id="10058133at2759"/>
<dbReference type="PAN-GO" id="Q6ZUT6">
    <property type="GO annotations" value="0 GO annotations based on evolutionary models"/>
</dbReference>
<dbReference type="PhylomeDB" id="Q6ZUT6"/>
<dbReference type="TreeFam" id="TF336272"/>
<dbReference type="PathwayCommons" id="Q6ZUT6"/>
<dbReference type="SignaLink" id="Q6ZUT6"/>
<dbReference type="BioGRID-ORCS" id="388115">
    <property type="hits" value="12 hits in 1114 CRISPR screens"/>
</dbReference>
<dbReference type="CD-CODE" id="DEE660B4">
    <property type="entry name" value="Stress granule"/>
</dbReference>
<dbReference type="GenomeRNAi" id="388115"/>
<dbReference type="Pharos" id="Q6ZUT6">
    <property type="development level" value="Tdark"/>
</dbReference>
<dbReference type="PRO" id="PR:Q6ZUT6"/>
<dbReference type="Proteomes" id="UP000005640">
    <property type="component" value="Chromosome 15"/>
</dbReference>
<dbReference type="RNAct" id="Q6ZUT6">
    <property type="molecule type" value="protein"/>
</dbReference>
<dbReference type="Bgee" id="ENSG00000188549">
    <property type="expression patterns" value="Expressed in apex of heart and 94 other cell types or tissues"/>
</dbReference>
<dbReference type="ExpressionAtlas" id="Q6ZUT6">
    <property type="expression patterns" value="baseline and differential"/>
</dbReference>
<dbReference type="GO" id="GO:0003723">
    <property type="term" value="F:RNA binding"/>
    <property type="evidence" value="ECO:0007005"/>
    <property type="project" value="UniProtKB"/>
</dbReference>
<dbReference type="InterPro" id="IPR029336">
    <property type="entry name" value="DUF4594"/>
</dbReference>
<dbReference type="PANTHER" id="PTHR15635">
    <property type="entry name" value="COILED-COIL DOMAIN CONTAINING PROTEIN 9"/>
    <property type="match status" value="1"/>
</dbReference>
<dbReference type="PANTHER" id="PTHR15635:SF10">
    <property type="entry name" value="COILED-COIL DOMAIN-CONTAINING PROTEIN 9B"/>
    <property type="match status" value="1"/>
</dbReference>
<dbReference type="Pfam" id="PF15266">
    <property type="entry name" value="DUF4594"/>
    <property type="match status" value="1"/>
</dbReference>
<sequence length="534" mass="57325">MISCAEQRSRQGEAGRGPAPVAPAFLPLWLPRGCSGILSVPAVAMHSAGTPRAESPMSRQEKDAELDRRIVALRKKNQALLRRYQEIQEDRRQAEQGGMAVTTPALLQPDGLTVTISQVPGEKRVVSRNWARGTCGPRVTNEMLEDEDAEDHGGTFCLGELVELAVTMENKAEGKRIVSEKPTRARNQGIEGSPGGRVTRSPPTQVAISSDSARKGSWEPWSRPVGEPPEAGWDYAQWKQEREQIDLARLARHRDAQGDWRRPWDLDKAKSTLQDCSQLRGEGPARAGSRRGPRSHQKLQPPPLLPDGKGRGGQASRPSVAPATGSKARGKERLTGRARRWDMKEDKEELEGQEGSQSTRETPSEEEQAQKQSGMEQGRLGSAPAASPALASPEGPKGESVASTASSVPCSPQEPDLAPLDLSLGGAGIPGPRESGCVLGLRPGAQESPVSWPEGSKQQPLGWSNHQAELEVQTCPEPQRGAGLPEPGEDRSGKSGAQQGLAPRSRPTRGGSQRSRGTAGVRRRTGRPGPAGRC</sequence>
<proteinExistence type="evidence at protein level"/>
<organism>
    <name type="scientific">Homo sapiens</name>
    <name type="common">Human</name>
    <dbReference type="NCBI Taxonomy" id="9606"/>
    <lineage>
        <taxon>Eukaryota</taxon>
        <taxon>Metazoa</taxon>
        <taxon>Chordata</taxon>
        <taxon>Craniata</taxon>
        <taxon>Vertebrata</taxon>
        <taxon>Euteleostomi</taxon>
        <taxon>Mammalia</taxon>
        <taxon>Eutheria</taxon>
        <taxon>Euarchontoglires</taxon>
        <taxon>Primates</taxon>
        <taxon>Haplorrhini</taxon>
        <taxon>Catarrhini</taxon>
        <taxon>Hominidae</taxon>
        <taxon>Homo</taxon>
    </lineage>
</organism>
<accession>Q6ZUT6</accession>
<accession>B9EIQ8</accession>
<accession>Q68DG9</accession>
<accession>Q6ZTM3</accession>
<accession>Q6ZU22</accession>
<evidence type="ECO:0000255" key="1"/>
<evidence type="ECO:0000256" key="2">
    <source>
        <dbReference type="SAM" id="MobiDB-lite"/>
    </source>
</evidence>
<evidence type="ECO:0000269" key="3">
    <source>
    </source>
</evidence>
<evidence type="ECO:0000303" key="4">
    <source>
    </source>
</evidence>
<evidence type="ECO:0000303" key="5">
    <source>
    </source>
</evidence>
<evidence type="ECO:0000303" key="6">
    <source>
    </source>
</evidence>
<evidence type="ECO:0000305" key="7"/>
<evidence type="ECO:0000312" key="8">
    <source>
        <dbReference type="HGNC" id="HGNC:33488"/>
    </source>
</evidence>
<evidence type="ECO:0007744" key="9">
    <source>
    </source>
</evidence>
<evidence type="ECO:0007744" key="10">
    <source>
    </source>
</evidence>
<evidence type="ECO:0007744" key="11">
    <source>
    </source>
</evidence>
<comment type="alternative products">
    <event type="alternative splicing"/>
    <event type="alternative initiation"/>
    <isoform>
        <id>Q6ZUT6-1</id>
        <name>1</name>
        <sequence type="displayed"/>
    </isoform>
    <isoform>
        <id>Q6ZUT6-2</id>
        <name>2</name>
        <sequence type="described" ref="VSP_027037 VSP_027040"/>
    </isoform>
    <isoform>
        <id>Q6ZUT6-3</id>
        <name>3</name>
        <sequence type="described" ref="VSP_027038 VSP_027039 VSP_027041 VSP_027042"/>
    </isoform>
    <isoform>
        <id>Q6ZUT6-4</id>
        <name>4</name>
        <sequence type="described" ref="VSP_027038 VSP_027039"/>
    </isoform>
    <isoform>
        <id>Q6ZUT6-5</id>
        <name>5</name>
        <sequence type="described" ref="VSP_062166"/>
    </isoform>
</comment>
<comment type="sequence caution" evidence="7">
    <conflict type="erroneous initiation">
        <sequence resource="EMBL-CDS" id="CAH18251"/>
    </conflict>
    <text>Truncated N-terminus.</text>
</comment>
<keyword id="KW-0024">Alternative initiation</keyword>
<keyword id="KW-0025">Alternative splicing</keyword>
<keyword id="KW-0175">Coiled coil</keyword>
<keyword id="KW-0597">Phosphoprotein</keyword>
<keyword id="KW-1267">Proteomics identification</keyword>
<keyword id="KW-1185">Reference proteome</keyword>
<reference key="1">
    <citation type="journal article" date="2004" name="Nat. Genet.">
        <title>Complete sequencing and characterization of 21,243 full-length human cDNAs.</title>
        <authorList>
            <person name="Ota T."/>
            <person name="Suzuki Y."/>
            <person name="Nishikawa T."/>
            <person name="Otsuki T."/>
            <person name="Sugiyama T."/>
            <person name="Irie R."/>
            <person name="Wakamatsu A."/>
            <person name="Hayashi K."/>
            <person name="Sato H."/>
            <person name="Nagai K."/>
            <person name="Kimura K."/>
            <person name="Makita H."/>
            <person name="Sekine M."/>
            <person name="Obayashi M."/>
            <person name="Nishi T."/>
            <person name="Shibahara T."/>
            <person name="Tanaka T."/>
            <person name="Ishii S."/>
            <person name="Yamamoto J."/>
            <person name="Saito K."/>
            <person name="Kawai Y."/>
            <person name="Isono Y."/>
            <person name="Nakamura Y."/>
            <person name="Nagahari K."/>
            <person name="Murakami K."/>
            <person name="Yasuda T."/>
            <person name="Iwayanagi T."/>
            <person name="Wagatsuma M."/>
            <person name="Shiratori A."/>
            <person name="Sudo H."/>
            <person name="Hosoiri T."/>
            <person name="Kaku Y."/>
            <person name="Kodaira H."/>
            <person name="Kondo H."/>
            <person name="Sugawara M."/>
            <person name="Takahashi M."/>
            <person name="Kanda K."/>
            <person name="Yokoi T."/>
            <person name="Furuya T."/>
            <person name="Kikkawa E."/>
            <person name="Omura Y."/>
            <person name="Abe K."/>
            <person name="Kamihara K."/>
            <person name="Katsuta N."/>
            <person name="Sato K."/>
            <person name="Tanikawa M."/>
            <person name="Yamazaki M."/>
            <person name="Ninomiya K."/>
            <person name="Ishibashi T."/>
            <person name="Yamashita H."/>
            <person name="Murakawa K."/>
            <person name="Fujimori K."/>
            <person name="Tanai H."/>
            <person name="Kimata M."/>
            <person name="Watanabe M."/>
            <person name="Hiraoka S."/>
            <person name="Chiba Y."/>
            <person name="Ishida S."/>
            <person name="Ono Y."/>
            <person name="Takiguchi S."/>
            <person name="Watanabe S."/>
            <person name="Yosida M."/>
            <person name="Hotuta T."/>
            <person name="Kusano J."/>
            <person name="Kanehori K."/>
            <person name="Takahashi-Fujii A."/>
            <person name="Hara H."/>
            <person name="Tanase T.-O."/>
            <person name="Nomura Y."/>
            <person name="Togiya S."/>
            <person name="Komai F."/>
            <person name="Hara R."/>
            <person name="Takeuchi K."/>
            <person name="Arita M."/>
            <person name="Imose N."/>
            <person name="Musashino K."/>
            <person name="Yuuki H."/>
            <person name="Oshima A."/>
            <person name="Sasaki N."/>
            <person name="Aotsuka S."/>
            <person name="Yoshikawa Y."/>
            <person name="Matsunawa H."/>
            <person name="Ichihara T."/>
            <person name="Shiohata N."/>
            <person name="Sano S."/>
            <person name="Moriya S."/>
            <person name="Momiyama H."/>
            <person name="Satoh N."/>
            <person name="Takami S."/>
            <person name="Terashima Y."/>
            <person name="Suzuki O."/>
            <person name="Nakagawa S."/>
            <person name="Senoh A."/>
            <person name="Mizoguchi H."/>
            <person name="Goto Y."/>
            <person name="Shimizu F."/>
            <person name="Wakebe H."/>
            <person name="Hishigaki H."/>
            <person name="Watanabe T."/>
            <person name="Sugiyama A."/>
            <person name="Takemoto M."/>
            <person name="Kawakami B."/>
            <person name="Yamazaki M."/>
            <person name="Watanabe K."/>
            <person name="Kumagai A."/>
            <person name="Itakura S."/>
            <person name="Fukuzumi Y."/>
            <person name="Fujimori Y."/>
            <person name="Komiyama M."/>
            <person name="Tashiro H."/>
            <person name="Tanigami A."/>
            <person name="Fujiwara T."/>
            <person name="Ono T."/>
            <person name="Yamada K."/>
            <person name="Fujii Y."/>
            <person name="Ozaki K."/>
            <person name="Hirao M."/>
            <person name="Ohmori Y."/>
            <person name="Kawabata A."/>
            <person name="Hikiji T."/>
            <person name="Kobatake N."/>
            <person name="Inagaki H."/>
            <person name="Ikema Y."/>
            <person name="Okamoto S."/>
            <person name="Okitani R."/>
            <person name="Kawakami T."/>
            <person name="Noguchi S."/>
            <person name="Itoh T."/>
            <person name="Shigeta K."/>
            <person name="Senba T."/>
            <person name="Matsumura K."/>
            <person name="Nakajima Y."/>
            <person name="Mizuno T."/>
            <person name="Morinaga M."/>
            <person name="Sasaki M."/>
            <person name="Togashi T."/>
            <person name="Oyama M."/>
            <person name="Hata H."/>
            <person name="Watanabe M."/>
            <person name="Komatsu T."/>
            <person name="Mizushima-Sugano J."/>
            <person name="Satoh T."/>
            <person name="Shirai Y."/>
            <person name="Takahashi Y."/>
            <person name="Nakagawa K."/>
            <person name="Okumura K."/>
            <person name="Nagase T."/>
            <person name="Nomura N."/>
            <person name="Kikuchi H."/>
            <person name="Masuho Y."/>
            <person name="Yamashita R."/>
            <person name="Nakai K."/>
            <person name="Yada T."/>
            <person name="Nakamura Y."/>
            <person name="Ohara O."/>
            <person name="Isogai T."/>
            <person name="Sugano S."/>
        </authorList>
    </citation>
    <scope>NUCLEOTIDE SEQUENCE [LARGE SCALE MRNA] (ISOFORMS 1; 2 AND 3)</scope>
    <source>
        <tissue>Teratocarcinoma</tissue>
        <tissue>Testis</tissue>
        <tissue>Uterus</tissue>
    </source>
</reference>
<reference key="2">
    <citation type="submission" date="2005-07" db="EMBL/GenBank/DDBJ databases">
        <authorList>
            <person name="Mural R.J."/>
            <person name="Istrail S."/>
            <person name="Sutton G.G."/>
            <person name="Florea L."/>
            <person name="Halpern A.L."/>
            <person name="Mobarry C.M."/>
            <person name="Lippert R."/>
            <person name="Walenz B."/>
            <person name="Shatkay H."/>
            <person name="Dew I."/>
            <person name="Miller J.R."/>
            <person name="Flanigan M.J."/>
            <person name="Edwards N.J."/>
            <person name="Bolanos R."/>
            <person name="Fasulo D."/>
            <person name="Halldorsson B.V."/>
            <person name="Hannenhalli S."/>
            <person name="Turner R."/>
            <person name="Yooseph S."/>
            <person name="Lu F."/>
            <person name="Nusskern D.R."/>
            <person name="Shue B.C."/>
            <person name="Zheng X.H."/>
            <person name="Zhong F."/>
            <person name="Delcher A.L."/>
            <person name="Huson D.H."/>
            <person name="Kravitz S.A."/>
            <person name="Mouchard L."/>
            <person name="Reinert K."/>
            <person name="Remington K.A."/>
            <person name="Clark A.G."/>
            <person name="Waterman M.S."/>
            <person name="Eichler E.E."/>
            <person name="Adams M.D."/>
            <person name="Hunkapiller M.W."/>
            <person name="Myers E.W."/>
            <person name="Venter J.C."/>
        </authorList>
    </citation>
    <scope>NUCLEOTIDE SEQUENCE [LARGE SCALE GENOMIC DNA]</scope>
</reference>
<reference key="3">
    <citation type="journal article" date="2004" name="Genome Res.">
        <title>The status, quality, and expansion of the NIH full-length cDNA project: the Mammalian Gene Collection (MGC).</title>
        <authorList>
            <consortium name="The MGC Project Team"/>
        </authorList>
    </citation>
    <scope>NUCLEOTIDE SEQUENCE [LARGE SCALE MRNA] (ISOFORM 2)</scope>
</reference>
<reference key="4">
    <citation type="journal article" date="2007" name="BMC Genomics">
        <title>The full-ORF clone resource of the German cDNA consortium.</title>
        <authorList>
            <person name="Bechtel S."/>
            <person name="Rosenfelder H."/>
            <person name="Duda A."/>
            <person name="Schmidt C.P."/>
            <person name="Ernst U."/>
            <person name="Wellenreuther R."/>
            <person name="Mehrle A."/>
            <person name="Schuster C."/>
            <person name="Bahr A."/>
            <person name="Bloecker H."/>
            <person name="Heubner D."/>
            <person name="Hoerlein A."/>
            <person name="Michel G."/>
            <person name="Wedler H."/>
            <person name="Koehrer K."/>
            <person name="Ottenwaelder B."/>
            <person name="Poustka A."/>
            <person name="Wiemann S."/>
            <person name="Schupp I."/>
        </authorList>
    </citation>
    <scope>NUCLEOTIDE SEQUENCE [LARGE SCALE MRNA] OF 30-534 (ISOFORM 4)</scope>
    <source>
        <tissue>Endometrial tumor</tissue>
    </source>
</reference>
<reference key="5">
    <citation type="journal article" date="2006" name="Cell">
        <title>Global, in vivo, and site-specific phosphorylation dynamics in signaling networks.</title>
        <authorList>
            <person name="Olsen J.V."/>
            <person name="Blagoev B."/>
            <person name="Gnad F."/>
            <person name="Macek B."/>
            <person name="Kumar C."/>
            <person name="Mortensen P."/>
            <person name="Mann M."/>
        </authorList>
    </citation>
    <scope>PHOSPHORYLATION [LARGE SCALE ANALYSIS] AT SER-392</scope>
    <scope>IDENTIFICATION BY MASS SPECTROMETRY [LARGE SCALE ANALYSIS]</scope>
    <source>
        <tissue>Cervix carcinoma</tissue>
    </source>
</reference>
<reference key="6">
    <citation type="journal article" date="2008" name="Proc. Natl. Acad. Sci. U.S.A.">
        <title>A quantitative atlas of mitotic phosphorylation.</title>
        <authorList>
            <person name="Dephoure N."/>
            <person name="Zhou C."/>
            <person name="Villen J."/>
            <person name="Beausoleil S.A."/>
            <person name="Bakalarski C.E."/>
            <person name="Elledge S.J."/>
            <person name="Gygi S.P."/>
        </authorList>
    </citation>
    <scope>IDENTIFICATION BY MASS SPECTROMETRY [LARGE SCALE ANALYSIS]</scope>
    <source>
        <tissue>Cervix carcinoma</tissue>
    </source>
</reference>
<reference key="7">
    <citation type="journal article" date="2013" name="J. Proteome Res.">
        <title>Toward a comprehensive characterization of a human cancer cell phosphoproteome.</title>
        <authorList>
            <person name="Zhou H."/>
            <person name="Di Palma S."/>
            <person name="Preisinger C."/>
            <person name="Peng M."/>
            <person name="Polat A.N."/>
            <person name="Heck A.J."/>
            <person name="Mohammed S."/>
        </authorList>
    </citation>
    <scope>PHOSPHORYLATION [LARGE SCALE ANALYSIS] AT SER-201</scope>
    <scope>IDENTIFICATION BY MASS SPECTROMETRY [LARGE SCALE ANALYSIS]</scope>
    <source>
        <tissue>Cervix carcinoma</tissue>
    </source>
</reference>
<reference key="8">
    <citation type="journal article" date="2014" name="J. Proteomics">
        <title>An enzyme assisted RP-RPLC approach for in-depth analysis of human liver phosphoproteome.</title>
        <authorList>
            <person name="Bian Y."/>
            <person name="Song C."/>
            <person name="Cheng K."/>
            <person name="Dong M."/>
            <person name="Wang F."/>
            <person name="Huang J."/>
            <person name="Sun D."/>
            <person name="Wang L."/>
            <person name="Ye M."/>
            <person name="Zou H."/>
        </authorList>
    </citation>
    <scope>PHOSPHORYLATION [LARGE SCALE ANALYSIS] AT SER-201</scope>
    <scope>IDENTIFICATION BY MASS SPECTROMETRY [LARGE SCALE ANALYSIS]</scope>
    <source>
        <tissue>Liver</tissue>
    </source>
</reference>
<reference key="9">
    <citation type="journal article" date="2014" name="Mol. Cell. Proteomics">
        <title>Immunoaffinity enrichment and mass spectrometry analysis of protein methylation.</title>
        <authorList>
            <person name="Guo A."/>
            <person name="Gu H."/>
            <person name="Zhou J."/>
            <person name="Mulhern D."/>
            <person name="Wang Y."/>
            <person name="Lee K.A."/>
            <person name="Yang V."/>
            <person name="Aguiar M."/>
            <person name="Kornhauser J."/>
            <person name="Jia X."/>
            <person name="Ren J."/>
            <person name="Beausoleil S.A."/>
            <person name="Silva J.C."/>
            <person name="Vemulapalli V."/>
            <person name="Bedford M.T."/>
            <person name="Comb M.J."/>
        </authorList>
    </citation>
    <scope>IDENTIFICATION BY MASS SPECTROMETRY [LARGE SCALE ANALYSIS]</scope>
    <source>
        <tissue>Colon carcinoma</tissue>
    </source>
</reference>
<reference key="10">
    <citation type="journal article" date="2006" name="Science">
        <title>The consensus coding sequences of human breast and colorectal cancers.</title>
        <authorList>
            <person name="Sjoeblom T."/>
            <person name="Jones S."/>
            <person name="Wood L.D."/>
            <person name="Parsons D.W."/>
            <person name="Lin J."/>
            <person name="Barber T.D."/>
            <person name="Mandelker D."/>
            <person name="Leary R.J."/>
            <person name="Ptak J."/>
            <person name="Silliman N."/>
            <person name="Szabo S."/>
            <person name="Buckhaults P."/>
            <person name="Farrell C."/>
            <person name="Meeh P."/>
            <person name="Markowitz S.D."/>
            <person name="Willis J."/>
            <person name="Dawson D."/>
            <person name="Willson J.K.V."/>
            <person name="Gazdar A.F."/>
            <person name="Hartigan J."/>
            <person name="Wu L."/>
            <person name="Liu C."/>
            <person name="Parmigiani G."/>
            <person name="Park B.H."/>
            <person name="Bachman K.E."/>
            <person name="Papadopoulos N."/>
            <person name="Vogelstein B."/>
            <person name="Kinzler K.W."/>
            <person name="Velculescu V.E."/>
        </authorList>
    </citation>
    <scope>VARIANT [LARGE SCALE ANALYSIS] GLU-189</scope>
</reference>
<name>CCD9B_HUMAN</name>
<protein>
    <recommendedName>
        <fullName evidence="8">Coiled-coil domain-containing protein 9B</fullName>
    </recommendedName>
</protein>
<gene>
    <name evidence="8" type="primary">CCDC9B</name>
    <name evidence="8" type="synonym">C15orf52</name>
</gene>